<feature type="chain" id="PRO_0000148166" description="ATP-dependent protease subunit HslV">
    <location>
        <begin position="1"/>
        <end position="178"/>
    </location>
</feature>
<feature type="active site" evidence="1">
    <location>
        <position position="8"/>
    </location>
</feature>
<feature type="binding site" evidence="1">
    <location>
        <position position="163"/>
    </location>
    <ligand>
        <name>Na(+)</name>
        <dbReference type="ChEBI" id="CHEBI:29101"/>
    </ligand>
</feature>
<feature type="binding site" evidence="1">
    <location>
        <position position="166"/>
    </location>
    <ligand>
        <name>Na(+)</name>
        <dbReference type="ChEBI" id="CHEBI:29101"/>
    </ligand>
</feature>
<feature type="binding site" evidence="1">
    <location>
        <position position="169"/>
    </location>
    <ligand>
        <name>Na(+)</name>
        <dbReference type="ChEBI" id="CHEBI:29101"/>
    </ligand>
</feature>
<comment type="function">
    <text evidence="1">Protease subunit of a proteasome-like degradation complex believed to be a general protein degrading machinery.</text>
</comment>
<comment type="catalytic activity">
    <reaction evidence="1">
        <text>ATP-dependent cleavage of peptide bonds with broad specificity.</text>
        <dbReference type="EC" id="3.4.25.2"/>
    </reaction>
</comment>
<comment type="activity regulation">
    <text evidence="1">Allosterically activated by HslU binding.</text>
</comment>
<comment type="subunit">
    <text evidence="1">A double ring-shaped homohexamer of HslV is capped on each side by a ring-shaped HslU homohexamer. The assembly of the HslU/HslV complex is dependent on binding of ATP.</text>
</comment>
<comment type="subcellular location">
    <subcellularLocation>
        <location evidence="1">Cytoplasm</location>
    </subcellularLocation>
</comment>
<comment type="similarity">
    <text evidence="1">Belongs to the peptidase T1B family. HslV subfamily.</text>
</comment>
<sequence>MSNVFHATTIVCVRRGDKVAIAGDGQVTLGHTVMKSNARKVRRLGRDGQVLAGFAGAAADAFTLFELFEAKLEKHGQLSRAAVELAKDWRTERRLGKLEALLVVADKETSLVISGTGDVIEPEDGIVAIGSGGSYALSAARALMAHTALDARTIATEAIGIAGNICIYTNRNVVVDEL</sequence>
<evidence type="ECO:0000255" key="1">
    <source>
        <dbReference type="HAMAP-Rule" id="MF_00248"/>
    </source>
</evidence>
<reference key="1">
    <citation type="journal article" date="2000" name="Nature">
        <title>The genome sequence of the plant pathogen Xylella fastidiosa.</title>
        <authorList>
            <person name="Simpson A.J.G."/>
            <person name="Reinach F.C."/>
            <person name="Arruda P."/>
            <person name="Abreu F.A."/>
            <person name="Acencio M."/>
            <person name="Alvarenga R."/>
            <person name="Alves L.M.C."/>
            <person name="Araya J.E."/>
            <person name="Baia G.S."/>
            <person name="Baptista C.S."/>
            <person name="Barros M.H."/>
            <person name="Bonaccorsi E.D."/>
            <person name="Bordin S."/>
            <person name="Bove J.M."/>
            <person name="Briones M.R.S."/>
            <person name="Bueno M.R.P."/>
            <person name="Camargo A.A."/>
            <person name="Camargo L.E.A."/>
            <person name="Carraro D.M."/>
            <person name="Carrer H."/>
            <person name="Colauto N.B."/>
            <person name="Colombo C."/>
            <person name="Costa F.F."/>
            <person name="Costa M.C.R."/>
            <person name="Costa-Neto C.M."/>
            <person name="Coutinho L.L."/>
            <person name="Cristofani M."/>
            <person name="Dias-Neto E."/>
            <person name="Docena C."/>
            <person name="El-Dorry H."/>
            <person name="Facincani A.P."/>
            <person name="Ferreira A.J.S."/>
            <person name="Ferreira V.C.A."/>
            <person name="Ferro J.A."/>
            <person name="Fraga J.S."/>
            <person name="Franca S.C."/>
            <person name="Franco M.C."/>
            <person name="Frohme M."/>
            <person name="Furlan L.R."/>
            <person name="Garnier M."/>
            <person name="Goldman G.H."/>
            <person name="Goldman M.H.S."/>
            <person name="Gomes S.L."/>
            <person name="Gruber A."/>
            <person name="Ho P.L."/>
            <person name="Hoheisel J.D."/>
            <person name="Junqueira M.L."/>
            <person name="Kemper E.L."/>
            <person name="Kitajima J.P."/>
            <person name="Krieger J.E."/>
            <person name="Kuramae E.E."/>
            <person name="Laigret F."/>
            <person name="Lambais M.R."/>
            <person name="Leite L.C.C."/>
            <person name="Lemos E.G.M."/>
            <person name="Lemos M.V.F."/>
            <person name="Lopes S.A."/>
            <person name="Lopes C.R."/>
            <person name="Machado J.A."/>
            <person name="Machado M.A."/>
            <person name="Madeira A.M.B.N."/>
            <person name="Madeira H.M.F."/>
            <person name="Marino C.L."/>
            <person name="Marques M.V."/>
            <person name="Martins E.A.L."/>
            <person name="Martins E.M.F."/>
            <person name="Matsukuma A.Y."/>
            <person name="Menck C.F.M."/>
            <person name="Miracca E.C."/>
            <person name="Miyaki C.Y."/>
            <person name="Monteiro-Vitorello C.B."/>
            <person name="Moon D.H."/>
            <person name="Nagai M.A."/>
            <person name="Nascimento A.L.T.O."/>
            <person name="Netto L.E.S."/>
            <person name="Nhani A. Jr."/>
            <person name="Nobrega F.G."/>
            <person name="Nunes L.R."/>
            <person name="Oliveira M.A."/>
            <person name="de Oliveira M.C."/>
            <person name="de Oliveira R.C."/>
            <person name="Palmieri D.A."/>
            <person name="Paris A."/>
            <person name="Peixoto B.R."/>
            <person name="Pereira G.A.G."/>
            <person name="Pereira H.A. Jr."/>
            <person name="Pesquero J.B."/>
            <person name="Quaggio R.B."/>
            <person name="Roberto P.G."/>
            <person name="Rodrigues V."/>
            <person name="de Rosa A.J.M."/>
            <person name="de Rosa V.E. Jr."/>
            <person name="de Sa R.G."/>
            <person name="Santelli R.V."/>
            <person name="Sawasaki H.E."/>
            <person name="da Silva A.C.R."/>
            <person name="da Silva A.M."/>
            <person name="da Silva F.R."/>
            <person name="Silva W.A. Jr."/>
            <person name="da Silveira J.F."/>
            <person name="Silvestri M.L.Z."/>
            <person name="Siqueira W.J."/>
            <person name="de Souza A.A."/>
            <person name="de Souza A.P."/>
            <person name="Terenzi M.F."/>
            <person name="Truffi D."/>
            <person name="Tsai S.M."/>
            <person name="Tsuhako M.H."/>
            <person name="Vallada H."/>
            <person name="Van Sluys M.A."/>
            <person name="Verjovski-Almeida S."/>
            <person name="Vettore A.L."/>
            <person name="Zago M.A."/>
            <person name="Zatz M."/>
            <person name="Meidanis J."/>
            <person name="Setubal J.C."/>
        </authorList>
    </citation>
    <scope>NUCLEOTIDE SEQUENCE [LARGE SCALE GENOMIC DNA]</scope>
    <source>
        <strain>9a5c</strain>
    </source>
</reference>
<keyword id="KW-0021">Allosteric enzyme</keyword>
<keyword id="KW-0963">Cytoplasm</keyword>
<keyword id="KW-0378">Hydrolase</keyword>
<keyword id="KW-0479">Metal-binding</keyword>
<keyword id="KW-0645">Protease</keyword>
<keyword id="KW-0915">Sodium</keyword>
<keyword id="KW-0888">Threonine protease</keyword>
<dbReference type="EC" id="3.4.25.2" evidence="1"/>
<dbReference type="EMBL" id="AE003849">
    <property type="protein sequence ID" value="AAF84293.1"/>
    <property type="molecule type" value="Genomic_DNA"/>
</dbReference>
<dbReference type="PIR" id="H82674">
    <property type="entry name" value="H82674"/>
</dbReference>
<dbReference type="SMR" id="P65799"/>
<dbReference type="STRING" id="160492.XF_1484"/>
<dbReference type="MEROPS" id="T01.006"/>
<dbReference type="KEGG" id="xfa:XF_1484"/>
<dbReference type="eggNOG" id="COG5405">
    <property type="taxonomic scope" value="Bacteria"/>
</dbReference>
<dbReference type="HOGENOM" id="CLU_093872_1_0_6"/>
<dbReference type="Proteomes" id="UP000000812">
    <property type="component" value="Chromosome"/>
</dbReference>
<dbReference type="GO" id="GO:0009376">
    <property type="term" value="C:HslUV protease complex"/>
    <property type="evidence" value="ECO:0007669"/>
    <property type="project" value="UniProtKB-UniRule"/>
</dbReference>
<dbReference type="GO" id="GO:0005839">
    <property type="term" value="C:proteasome core complex"/>
    <property type="evidence" value="ECO:0007669"/>
    <property type="project" value="InterPro"/>
</dbReference>
<dbReference type="GO" id="GO:0046872">
    <property type="term" value="F:metal ion binding"/>
    <property type="evidence" value="ECO:0007669"/>
    <property type="project" value="UniProtKB-KW"/>
</dbReference>
<dbReference type="GO" id="GO:0004298">
    <property type="term" value="F:threonine-type endopeptidase activity"/>
    <property type="evidence" value="ECO:0007669"/>
    <property type="project" value="UniProtKB-KW"/>
</dbReference>
<dbReference type="GO" id="GO:0051603">
    <property type="term" value="P:proteolysis involved in protein catabolic process"/>
    <property type="evidence" value="ECO:0007669"/>
    <property type="project" value="InterPro"/>
</dbReference>
<dbReference type="CDD" id="cd01913">
    <property type="entry name" value="protease_HslV"/>
    <property type="match status" value="1"/>
</dbReference>
<dbReference type="Gene3D" id="3.60.20.10">
    <property type="entry name" value="Glutamine Phosphoribosylpyrophosphate, subunit 1, domain 1"/>
    <property type="match status" value="1"/>
</dbReference>
<dbReference type="HAMAP" id="MF_00248">
    <property type="entry name" value="HslV"/>
    <property type="match status" value="1"/>
</dbReference>
<dbReference type="InterPro" id="IPR022281">
    <property type="entry name" value="ATP-dep_Prtase_HsIV_su"/>
</dbReference>
<dbReference type="InterPro" id="IPR029055">
    <property type="entry name" value="Ntn_hydrolases_N"/>
</dbReference>
<dbReference type="InterPro" id="IPR001353">
    <property type="entry name" value="Proteasome_sua/b"/>
</dbReference>
<dbReference type="InterPro" id="IPR023333">
    <property type="entry name" value="Proteasome_suB-type"/>
</dbReference>
<dbReference type="NCBIfam" id="TIGR03692">
    <property type="entry name" value="ATP_dep_HslV"/>
    <property type="match status" value="1"/>
</dbReference>
<dbReference type="NCBIfam" id="NF003964">
    <property type="entry name" value="PRK05456.1"/>
    <property type="match status" value="1"/>
</dbReference>
<dbReference type="PANTHER" id="PTHR32194:SF0">
    <property type="entry name" value="ATP-DEPENDENT PROTEASE SUBUNIT HSLV"/>
    <property type="match status" value="1"/>
</dbReference>
<dbReference type="PANTHER" id="PTHR32194">
    <property type="entry name" value="METALLOPROTEASE TLDD"/>
    <property type="match status" value="1"/>
</dbReference>
<dbReference type="Pfam" id="PF00227">
    <property type="entry name" value="Proteasome"/>
    <property type="match status" value="1"/>
</dbReference>
<dbReference type="PIRSF" id="PIRSF039093">
    <property type="entry name" value="HslV"/>
    <property type="match status" value="1"/>
</dbReference>
<dbReference type="SUPFAM" id="SSF56235">
    <property type="entry name" value="N-terminal nucleophile aminohydrolases (Ntn hydrolases)"/>
    <property type="match status" value="1"/>
</dbReference>
<dbReference type="PROSITE" id="PS51476">
    <property type="entry name" value="PROTEASOME_BETA_2"/>
    <property type="match status" value="1"/>
</dbReference>
<protein>
    <recommendedName>
        <fullName evidence="1">ATP-dependent protease subunit HslV</fullName>
        <ecNumber evidence="1">3.4.25.2</ecNumber>
    </recommendedName>
</protein>
<proteinExistence type="inferred from homology"/>
<accession>P65799</accession>
<accession>Q9PD95</accession>
<name>HSLV_XYLFA</name>
<organism>
    <name type="scientific">Xylella fastidiosa (strain 9a5c)</name>
    <dbReference type="NCBI Taxonomy" id="160492"/>
    <lineage>
        <taxon>Bacteria</taxon>
        <taxon>Pseudomonadati</taxon>
        <taxon>Pseudomonadota</taxon>
        <taxon>Gammaproteobacteria</taxon>
        <taxon>Lysobacterales</taxon>
        <taxon>Lysobacteraceae</taxon>
        <taxon>Xylella</taxon>
    </lineage>
</organism>
<gene>
    <name evidence="1" type="primary">hslV</name>
    <name type="ordered locus">XF_1484</name>
</gene>